<proteinExistence type="inferred from homology"/>
<accession>B5BF68</accession>
<name>MDTC_SALPK</name>
<gene>
    <name evidence="1" type="primary">mdtC</name>
    <name type="ordered locus">SSPA0696</name>
</gene>
<sequence length="1026" mass="111107">MRFFALFIYRPVATILIAAAITLCGILGFRLLPVAPLPQVDFPVIMVSASLPGASPETMASSVATPLERSLGRIAGVNEMTSSSSLGSTRIILEFNFDRDINGAARDVQAAINAAQSLLPGGMPSRPTYRKANPSDAPIMILTLTSESWSQGKLYDFASTQLAQTIAQIDGVGDVDVGGSSLPAVRVGLNPQALFNQGVSLDEVREAIDSANVRRPQGAIEDSVHRWQIQTNDELKTAAEYQPLIIHYNNGAAVRLGDVASVTDSVQDVRNAGMTNAKPAILLMIRKLPEANIIQTVDGIRAKLPELRAMIPAAIDLQIAQDRSPTIRASLQEVEETLAISVALVILVVFLFLRSGRATLIPAVAVPVSLIGTFAAMYLCGFSLNNLSLMALTIATGFVVDDAIVVLENIARHLEAGMKPLQAALQGTREVGFTVISMSLSLVAVFLPLLLMGGLPGRLLREFAVTLSVAIGISLVVSLTLTPMMCGWMLKSSKPRTQPRKRGVGRLLVALQQGYGTSLKWVLNHTRLVGVVFLGTVALNIWLYIAIPKTFFPEQDTGVLMGGIQADQSISFQAMRGKLQDFMKIIRDDPAVNNVTGFTGGSRVNSGMMFITLKPRGERKETAQQIIDRLRVKLAKEPGARLFLMAVQDIRVGGRQANASYQYTLLSDSLPALREWEPKIRKALSALPQLADVNSDQQDNGAEMNLIYDRDTMSRLGIDVQAANSLLNNTFGQRQISTIYQPMNQYKVVMEVDPRYTQDISALEKMFVINRDGKAIPLSYFAQWRPANAPLSVNHQGLSAASTIAFNLPTGTSLSQATEAINRTMTQLGVPSTVRGSFSGTAQVFQQTMNSQLILIVAAIATVYIVLEILYESYVHPLTILSTLPSAGVGALLALELFNAPFSLIALIGIMLLIGIVKKNAIMMVDFALEAQRSGGLTPEQAIFQACLLRFRPIMMTTLAALFGALPLVLSGGDGSELRQPLGITIVGGLVMSQLLTLYTTPVVYLFFDRLRLRFSRKNSKPVVEI</sequence>
<reference key="1">
    <citation type="journal article" date="2009" name="BMC Genomics">
        <title>Pseudogene accumulation in the evolutionary histories of Salmonella enterica serovars Paratyphi A and Typhi.</title>
        <authorList>
            <person name="Holt K.E."/>
            <person name="Thomson N.R."/>
            <person name="Wain J."/>
            <person name="Langridge G.C."/>
            <person name="Hasan R."/>
            <person name="Bhutta Z.A."/>
            <person name="Quail M.A."/>
            <person name="Norbertczak H."/>
            <person name="Walker D."/>
            <person name="Simmonds M."/>
            <person name="White B."/>
            <person name="Bason N."/>
            <person name="Mungall K."/>
            <person name="Dougan G."/>
            <person name="Parkhill J."/>
        </authorList>
    </citation>
    <scope>NUCLEOTIDE SEQUENCE [LARGE SCALE GENOMIC DNA]</scope>
    <source>
        <strain>AKU_12601</strain>
    </source>
</reference>
<dbReference type="EMBL" id="FM200053">
    <property type="protein sequence ID" value="CAR58828.1"/>
    <property type="molecule type" value="Genomic_DNA"/>
</dbReference>
<dbReference type="RefSeq" id="WP_001210079.1">
    <property type="nucleotide sequence ID" value="NC_011147.1"/>
</dbReference>
<dbReference type="SMR" id="B5BF68"/>
<dbReference type="KEGG" id="sek:SSPA0696"/>
<dbReference type="HOGENOM" id="CLU_002755_1_2_6"/>
<dbReference type="Proteomes" id="UP000001869">
    <property type="component" value="Chromosome"/>
</dbReference>
<dbReference type="GO" id="GO:0005886">
    <property type="term" value="C:plasma membrane"/>
    <property type="evidence" value="ECO:0007669"/>
    <property type="project" value="UniProtKB-SubCell"/>
</dbReference>
<dbReference type="GO" id="GO:0042910">
    <property type="term" value="F:xenobiotic transmembrane transporter activity"/>
    <property type="evidence" value="ECO:0007669"/>
    <property type="project" value="TreeGrafter"/>
</dbReference>
<dbReference type="FunFam" id="1.20.1640.10:FF:000001">
    <property type="entry name" value="Efflux pump membrane transporter"/>
    <property type="match status" value="1"/>
</dbReference>
<dbReference type="FunFam" id="3.30.70.1430:FF:000001">
    <property type="entry name" value="Efflux pump membrane transporter"/>
    <property type="match status" value="1"/>
</dbReference>
<dbReference type="FunFam" id="3.30.2090.10:FF:000004">
    <property type="entry name" value="Multidrug resistance protein MdtC"/>
    <property type="match status" value="1"/>
</dbReference>
<dbReference type="FunFam" id="3.30.2090.10:FF:000005">
    <property type="entry name" value="Multidrug resistance protein MdtC"/>
    <property type="match status" value="1"/>
</dbReference>
<dbReference type="FunFam" id="3.30.70.1430:FF:000004">
    <property type="entry name" value="Multidrug resistance protein MdtC"/>
    <property type="match status" value="1"/>
</dbReference>
<dbReference type="Gene3D" id="3.30.70.1430">
    <property type="entry name" value="Multidrug efflux transporter AcrB pore domain"/>
    <property type="match status" value="2"/>
</dbReference>
<dbReference type="Gene3D" id="3.30.70.1440">
    <property type="entry name" value="Multidrug efflux transporter AcrB pore domain"/>
    <property type="match status" value="1"/>
</dbReference>
<dbReference type="Gene3D" id="3.30.70.1320">
    <property type="entry name" value="Multidrug efflux transporter AcrB pore domain like"/>
    <property type="match status" value="1"/>
</dbReference>
<dbReference type="Gene3D" id="3.30.2090.10">
    <property type="entry name" value="Multidrug efflux transporter AcrB TolC docking domain, DN and DC subdomains"/>
    <property type="match status" value="2"/>
</dbReference>
<dbReference type="Gene3D" id="1.20.1640.10">
    <property type="entry name" value="Multidrug efflux transporter AcrB transmembrane domain"/>
    <property type="match status" value="2"/>
</dbReference>
<dbReference type="HAMAP" id="MF_01424">
    <property type="entry name" value="MdtC"/>
    <property type="match status" value="1"/>
</dbReference>
<dbReference type="InterPro" id="IPR027463">
    <property type="entry name" value="AcrB_DN_DC_subdom"/>
</dbReference>
<dbReference type="InterPro" id="IPR001036">
    <property type="entry name" value="Acrflvin-R"/>
</dbReference>
<dbReference type="InterPro" id="IPR023931">
    <property type="entry name" value="Multidrug-R_MdtC"/>
</dbReference>
<dbReference type="NCBIfam" id="NF007905">
    <property type="entry name" value="PRK10614.1"/>
    <property type="match status" value="1"/>
</dbReference>
<dbReference type="NCBIfam" id="NF033617">
    <property type="entry name" value="RND_permease_2"/>
    <property type="match status" value="1"/>
</dbReference>
<dbReference type="PANTHER" id="PTHR32063">
    <property type="match status" value="1"/>
</dbReference>
<dbReference type="PANTHER" id="PTHR32063:SF34">
    <property type="entry name" value="MULTIDRUG RESISTANCE PROTEIN MDTC"/>
    <property type="match status" value="1"/>
</dbReference>
<dbReference type="Pfam" id="PF00873">
    <property type="entry name" value="ACR_tran"/>
    <property type="match status" value="1"/>
</dbReference>
<dbReference type="PRINTS" id="PR00702">
    <property type="entry name" value="ACRIFLAVINRP"/>
</dbReference>
<dbReference type="SUPFAM" id="SSF82693">
    <property type="entry name" value="Multidrug efflux transporter AcrB pore domain, PN1, PN2, PC1 and PC2 subdomains"/>
    <property type="match status" value="4"/>
</dbReference>
<dbReference type="SUPFAM" id="SSF82714">
    <property type="entry name" value="Multidrug efflux transporter AcrB TolC docking domain, DN and DC subdomains"/>
    <property type="match status" value="2"/>
</dbReference>
<dbReference type="SUPFAM" id="SSF82866">
    <property type="entry name" value="Multidrug efflux transporter AcrB transmembrane domain"/>
    <property type="match status" value="2"/>
</dbReference>
<keyword id="KW-0997">Cell inner membrane</keyword>
<keyword id="KW-1003">Cell membrane</keyword>
<keyword id="KW-0472">Membrane</keyword>
<keyword id="KW-0812">Transmembrane</keyword>
<keyword id="KW-1133">Transmembrane helix</keyword>
<keyword id="KW-0813">Transport</keyword>
<feature type="chain" id="PRO_1000145683" description="Multidrug resistance protein MdtC">
    <location>
        <begin position="1"/>
        <end position="1026"/>
    </location>
</feature>
<feature type="transmembrane region" description="Helical" evidence="1">
    <location>
        <begin position="15"/>
        <end position="35"/>
    </location>
</feature>
<feature type="transmembrane region" description="Helical" evidence="1">
    <location>
        <begin position="333"/>
        <end position="353"/>
    </location>
</feature>
<feature type="transmembrane region" description="Helical" evidence="1">
    <location>
        <begin position="360"/>
        <end position="380"/>
    </location>
</feature>
<feature type="transmembrane region" description="Helical" evidence="1">
    <location>
        <begin position="387"/>
        <end position="407"/>
    </location>
</feature>
<feature type="transmembrane region" description="Helical" evidence="1">
    <location>
        <begin position="431"/>
        <end position="451"/>
    </location>
</feature>
<feature type="transmembrane region" description="Helical" evidence="1">
    <location>
        <begin position="463"/>
        <end position="483"/>
    </location>
</feature>
<feature type="transmembrane region" description="Helical" evidence="1">
    <location>
        <begin position="528"/>
        <end position="548"/>
    </location>
</feature>
<feature type="transmembrane region" description="Helical" evidence="1">
    <location>
        <begin position="853"/>
        <end position="873"/>
    </location>
</feature>
<feature type="transmembrane region" description="Helical" evidence="1">
    <location>
        <begin position="897"/>
        <end position="917"/>
    </location>
</feature>
<feature type="transmembrane region" description="Helical" evidence="1">
    <location>
        <begin position="953"/>
        <end position="973"/>
    </location>
</feature>
<feature type="transmembrane region" description="Helical" evidence="1">
    <location>
        <begin position="984"/>
        <end position="1004"/>
    </location>
</feature>
<comment type="subunit">
    <text evidence="1">Part of a tripartite efflux system composed of MdtA, MdtB and MdtC. MdtC forms a heteromultimer with MdtB.</text>
</comment>
<comment type="subcellular location">
    <subcellularLocation>
        <location evidence="1">Cell inner membrane</location>
        <topology evidence="1">Multi-pass membrane protein</topology>
    </subcellularLocation>
</comment>
<comment type="similarity">
    <text evidence="1">Belongs to the resistance-nodulation-cell division (RND) (TC 2.A.6) family. MdtC subfamily.</text>
</comment>
<organism>
    <name type="scientific">Salmonella paratyphi A (strain AKU_12601)</name>
    <dbReference type="NCBI Taxonomy" id="554290"/>
    <lineage>
        <taxon>Bacteria</taxon>
        <taxon>Pseudomonadati</taxon>
        <taxon>Pseudomonadota</taxon>
        <taxon>Gammaproteobacteria</taxon>
        <taxon>Enterobacterales</taxon>
        <taxon>Enterobacteriaceae</taxon>
        <taxon>Salmonella</taxon>
    </lineage>
</organism>
<protein>
    <recommendedName>
        <fullName evidence="1">Multidrug resistance protein MdtC</fullName>
    </recommendedName>
    <alternativeName>
        <fullName evidence="1">Multidrug transporter MdtC</fullName>
    </alternativeName>
</protein>
<evidence type="ECO:0000255" key="1">
    <source>
        <dbReference type="HAMAP-Rule" id="MF_01424"/>
    </source>
</evidence>